<feature type="signal peptide" evidence="4">
    <location>
        <begin position="1"/>
        <end position="24"/>
    </location>
</feature>
<feature type="chain" id="PRO_0000280069" description="Hepatocyte growth factor receptor">
    <location>
        <begin position="25"/>
        <end position="1381"/>
    </location>
</feature>
<feature type="topological domain" description="Extracellular" evidence="4">
    <location>
        <begin position="25"/>
        <end position="932"/>
    </location>
</feature>
<feature type="transmembrane region" description="Helical" evidence="4">
    <location>
        <begin position="933"/>
        <end position="955"/>
    </location>
</feature>
<feature type="topological domain" description="Cytoplasmic" evidence="4">
    <location>
        <begin position="956"/>
        <end position="1381"/>
    </location>
</feature>
<feature type="domain" description="Sema" evidence="6">
    <location>
        <begin position="27"/>
        <end position="515"/>
    </location>
</feature>
<feature type="domain" description="IPT/TIG 1">
    <location>
        <begin position="563"/>
        <end position="655"/>
    </location>
</feature>
<feature type="domain" description="IPT/TIG 2">
    <location>
        <begin position="657"/>
        <end position="739"/>
    </location>
</feature>
<feature type="domain" description="IPT/TIG 3">
    <location>
        <begin position="742"/>
        <end position="836"/>
    </location>
</feature>
<feature type="domain" description="Protein kinase" evidence="5">
    <location>
        <begin position="1078"/>
        <end position="1345"/>
    </location>
</feature>
<feature type="region of interest" description="Interaction with RANBP9" evidence="1">
    <location>
        <begin position="1212"/>
        <end position="1381"/>
    </location>
</feature>
<feature type="region of interest" description="Interaction with MUC20" evidence="1">
    <location>
        <begin position="1320"/>
        <end position="1359"/>
    </location>
</feature>
<feature type="active site" description="Proton acceptor" evidence="5 7">
    <location>
        <position position="1204"/>
    </location>
</feature>
<feature type="binding site" evidence="5">
    <location>
        <begin position="1084"/>
        <end position="1092"/>
    </location>
    <ligand>
        <name>ATP</name>
        <dbReference type="ChEBI" id="CHEBI:30616"/>
    </ligand>
</feature>
<feature type="binding site" evidence="5">
    <location>
        <position position="1110"/>
    </location>
    <ligand>
        <name>ATP</name>
        <dbReference type="ChEBI" id="CHEBI:30616"/>
    </ligand>
</feature>
<feature type="site" description="Cleavage" evidence="4">
    <location>
        <begin position="307"/>
        <end position="308"/>
    </location>
</feature>
<feature type="modified residue" description="Phosphoserine" evidence="2">
    <location>
        <position position="966"/>
    </location>
</feature>
<feature type="modified residue" description="Phosphothreonine" evidence="2">
    <location>
        <position position="977"/>
    </location>
</feature>
<feature type="modified residue" description="Phosphoserine" evidence="2">
    <location>
        <position position="990"/>
    </location>
</feature>
<feature type="modified residue" description="Phosphoserine" evidence="2">
    <location>
        <position position="997"/>
    </location>
</feature>
<feature type="modified residue" description="Phosphoserine" evidence="2">
    <location>
        <position position="1000"/>
    </location>
</feature>
<feature type="modified residue" description="Phosphotyrosine" evidence="2">
    <location>
        <position position="1003"/>
    </location>
</feature>
<feature type="modified residue" description="Phosphotyrosine" evidence="2">
    <location>
        <position position="1230"/>
    </location>
</feature>
<feature type="modified residue" description="Phosphotyrosine; by autocatalysis" evidence="2">
    <location>
        <position position="1234"/>
    </location>
</feature>
<feature type="modified residue" description="Phosphotyrosine; by autocatalysis" evidence="2">
    <location>
        <position position="1235"/>
    </location>
</feature>
<feature type="modified residue" description="Phosphothreonine" evidence="2">
    <location>
        <position position="1289"/>
    </location>
</feature>
<feature type="modified residue" description="Phosphotyrosine; by autocatalysis" evidence="2">
    <location>
        <position position="1349"/>
    </location>
</feature>
<feature type="modified residue" description="Phosphotyrosine; by autocatalysis" evidence="2">
    <location>
        <position position="1356"/>
    </location>
</feature>
<feature type="modified residue" description="Phosphotyrosine" evidence="2">
    <location>
        <position position="1365"/>
    </location>
</feature>
<feature type="glycosylation site" description="N-linked (GlcNAc...) asparagine" evidence="4">
    <location>
        <position position="45"/>
    </location>
</feature>
<feature type="glycosylation site" description="N-linked (GlcNAc...) asparagine" evidence="4">
    <location>
        <position position="106"/>
    </location>
</feature>
<feature type="glycosylation site" description="N-linked (GlcNAc...) asparagine" evidence="4">
    <location>
        <position position="149"/>
    </location>
</feature>
<feature type="glycosylation site" description="N-linked (GlcNAc...) asparagine" evidence="4">
    <location>
        <position position="202"/>
    </location>
</feature>
<feature type="glycosylation site" description="N-linked (GlcNAc...) asparagine" evidence="4">
    <location>
        <position position="399"/>
    </location>
</feature>
<feature type="glycosylation site" description="N-linked (GlcNAc...) asparagine" evidence="4">
    <location>
        <position position="405"/>
    </location>
</feature>
<feature type="glycosylation site" description="O-linked (Man) threonine" evidence="2">
    <location>
        <position position="582"/>
    </location>
</feature>
<feature type="glycosylation site" description="N-linked (GlcNAc...) asparagine" evidence="4">
    <location>
        <position position="607"/>
    </location>
</feature>
<feature type="glycosylation site" description="N-linked (GlcNAc...) asparagine" evidence="4">
    <location>
        <position position="635"/>
    </location>
</feature>
<feature type="glycosylation site" description="O-linked (Man) threonine" evidence="2">
    <location>
        <position position="676"/>
    </location>
</feature>
<feature type="glycosylation site" description="O-linked (Man) threonine" evidence="2">
    <location>
        <position position="761"/>
    </location>
</feature>
<feature type="glycosylation site" description="N-linked (GlcNAc...) asparagine" evidence="4">
    <location>
        <position position="785"/>
    </location>
</feature>
<feature type="glycosylation site" description="N-linked (GlcNAc...) asparagine" evidence="4">
    <location>
        <position position="879"/>
    </location>
</feature>
<feature type="glycosylation site" description="N-linked (GlcNAc...) asparagine" evidence="4">
    <location>
        <position position="930"/>
    </location>
</feature>
<feature type="disulfide bond" evidence="6">
    <location>
        <begin position="95"/>
        <end position="101"/>
    </location>
</feature>
<feature type="disulfide bond" evidence="6">
    <location>
        <begin position="98"/>
        <end position="160"/>
    </location>
</feature>
<feature type="disulfide bond" evidence="6">
    <location>
        <begin position="133"/>
        <end position="141"/>
    </location>
</feature>
<feature type="disulfide bond" evidence="6">
    <location>
        <begin position="172"/>
        <end position="175"/>
    </location>
</feature>
<feature type="disulfide bond" evidence="6">
    <location>
        <begin position="298"/>
        <end position="363"/>
    </location>
</feature>
<feature type="disulfide bond" evidence="6">
    <location>
        <begin position="385"/>
        <end position="397"/>
    </location>
</feature>
<feature type="disulfide bond" evidence="6">
    <location>
        <begin position="520"/>
        <end position="538"/>
    </location>
</feature>
<feature type="disulfide bond" evidence="6">
    <location>
        <begin position="526"/>
        <end position="561"/>
    </location>
</feature>
<feature type="disulfide bond" evidence="6">
    <location>
        <begin position="529"/>
        <end position="545"/>
    </location>
</feature>
<feature type="disulfide bond" evidence="6">
    <location>
        <begin position="541"/>
        <end position="551"/>
    </location>
</feature>
<keyword id="KW-0067">ATP-binding</keyword>
<keyword id="KW-1015">Disulfide bond</keyword>
<keyword id="KW-0325">Glycoprotein</keyword>
<keyword id="KW-0418">Kinase</keyword>
<keyword id="KW-0472">Membrane</keyword>
<keyword id="KW-0547">Nucleotide-binding</keyword>
<keyword id="KW-0597">Phosphoprotein</keyword>
<keyword id="KW-0656">Proto-oncogene</keyword>
<keyword id="KW-0675">Receptor</keyword>
<keyword id="KW-1185">Reference proteome</keyword>
<keyword id="KW-0677">Repeat</keyword>
<keyword id="KW-0732">Signal</keyword>
<keyword id="KW-0808">Transferase</keyword>
<keyword id="KW-0812">Transmembrane</keyword>
<keyword id="KW-1133">Transmembrane helix</keyword>
<keyword id="KW-0829">Tyrosine-protein kinase</keyword>
<keyword id="KW-0832">Ubl conjugation</keyword>
<comment type="function">
    <text evidence="1">Receptor tyrosine kinase that transduces signals from the extracellular matrix into the cytoplasm by binding to hepatocyte growth factor/HGF ligand. Regulates many physiological processes including proliferation, scattering, morphogenesis and survival. Ligand binding at the cell surface induces autophosphorylation of MET on its intracellular domain that provides docking sites for downstream signaling molecules. Following activation by ligand, interacts with the PI3-kinase subunit PIK3R1, PLCG1, SRC, GRB2, STAT3 or the adapter GAB1. Recruitment of these downstream effectors by MET leads to the activation of several signaling cascades including the RAS-ERK, PI3 kinase-AKT, or PLCgamma-PKC. The RAS-ERK activation is associated with the morphogenetic effects while PI3K/AKT coordinates prosurvival effects. During embryonic development, MET signaling plays a role in gastrulation, development and migration of muscles and neuronal precursors, angiogenesis and kidney formation. In adults, participates in wound healing as well as organ regeneration and tissue remodeling. Also promotes differentiation and proliferation of hematopoietic cells (By similarity).</text>
</comment>
<comment type="catalytic activity">
    <reaction evidence="7">
        <text>L-tyrosyl-[protein] + ATP = O-phospho-L-tyrosyl-[protein] + ADP + H(+)</text>
        <dbReference type="Rhea" id="RHEA:10596"/>
        <dbReference type="Rhea" id="RHEA-COMP:10136"/>
        <dbReference type="Rhea" id="RHEA-COMP:20101"/>
        <dbReference type="ChEBI" id="CHEBI:15378"/>
        <dbReference type="ChEBI" id="CHEBI:30616"/>
        <dbReference type="ChEBI" id="CHEBI:46858"/>
        <dbReference type="ChEBI" id="CHEBI:61978"/>
        <dbReference type="ChEBI" id="CHEBI:456216"/>
        <dbReference type="EC" id="2.7.10.1"/>
    </reaction>
</comment>
<comment type="activity regulation">
    <text evidence="1">In its inactive state, the C-terminal tail interacts with the catalytic domain and inhibits the kinase activity. Upon ligand binding, the C-terminal tail is displaced and becomes phosphorylated, thus increasing the kinase activity (By similarity).</text>
</comment>
<comment type="subunit">
    <text evidence="2 3">Heterodimer made of an alpha chain (50 kDa) and a beta chain (145 kDa) which are disulfide linked. Binds PLXNB1. Interacts when phosphorylated with downstream effectors including STAT3, PIK3R1, SRC, PCLG1, GRB2 and GAB1. Interacts with SPSB1, SPSB2 and SPSB4. Interacts with INPP5D/SHIP1. When phosphorylated at Tyr-1356, interacts with INPPL1/SHIP2. Interacts with RANBP9 and RANBP10, as well as SPSB1, SPSB2, SPSB3 and SPSB4. SPSB1 binding occurs in the presence and in the absence of HGF, however HGF treatment has a positive effect on this interaction. Interacts with MUC20; prevents interaction with GRB2 and suppresses hepatocyte growth factor-induced cell proliferation. Interacts with GRB10. Interacts with PTPN1 and PTPN2. Interacts with HSP90AA1 and HSP90AB1; the interaction suppresses MET kinase activity. Interacts with tensin TNS3 (By similarity). Interacts (when phosphorylated) with tensin TNS4 (via SH2 domain); the interaction increases MET protein stability by inhibiting MET endocytosis and subsequent lysosomal degradation (By similarity).</text>
</comment>
<comment type="subcellular location">
    <subcellularLocation>
        <location evidence="1">Membrane</location>
        <topology evidence="1">Single-pass type I membrane protein</topology>
    </subcellularLocation>
</comment>
<comment type="domain">
    <text evidence="1">The kinase domain is involved in SPSB1 binding.</text>
</comment>
<comment type="domain">
    <text evidence="1">The beta-propeller Sema domain mediates binding to HGF.</text>
</comment>
<comment type="PTM">
    <text evidence="2">Autophosphorylated in response to ligand binding on Tyr-1234 and Tyr-1235 in the kinase domain leading to further phosphorylation of Tyr-1349 and Tyr-1356 in the C-terminal multifunctional docking site. Dephosphorylated by PTPRJ at Tyr-1349 and Tyr-1365. Dephosphorylated by PTPN1 and PTPN2 (By similarity).</text>
</comment>
<comment type="PTM">
    <text evidence="2">Ubiquitinated. Ubiquitination by CBL regulates the receptor stability and activity through proteasomal degradation (By similarity).</text>
</comment>
<comment type="PTM">
    <text evidence="2">O-mannosylation of IPT/TIG domains by TMEM260 is required for protein maturation. O-mannosylated residues are composed of single mannose glycans that are not elongated or modified.</text>
</comment>
<comment type="similarity">
    <text evidence="5">Belongs to the protein kinase superfamily. Tyr protein kinase family.</text>
</comment>
<dbReference type="EC" id="2.7.10.1"/>
<dbReference type="EMBL" id="DP000233">
    <property type="protein sequence ID" value="AAR16221.2"/>
    <property type="molecule type" value="Genomic_DNA"/>
</dbReference>
<dbReference type="RefSeq" id="NP_001162185.1">
    <property type="nucleotide sequence ID" value="NM_001168714.1"/>
</dbReference>
<dbReference type="SMR" id="A0M8R7"/>
<dbReference type="STRING" id="9555.ENSPANP00000030652"/>
<dbReference type="GlyCosmos" id="A0M8R7">
    <property type="glycosylation" value="11 sites, No reported glycans"/>
</dbReference>
<dbReference type="GeneID" id="100126669"/>
<dbReference type="KEGG" id="panu:100126669"/>
<dbReference type="CTD" id="4233"/>
<dbReference type="eggNOG" id="KOG1095">
    <property type="taxonomic scope" value="Eukaryota"/>
</dbReference>
<dbReference type="eggNOG" id="KOG3610">
    <property type="taxonomic scope" value="Eukaryota"/>
</dbReference>
<dbReference type="Proteomes" id="UP000028761">
    <property type="component" value="Unplaced"/>
</dbReference>
<dbReference type="GO" id="GO:0005886">
    <property type="term" value="C:plasma membrane"/>
    <property type="evidence" value="ECO:0007669"/>
    <property type="project" value="TreeGrafter"/>
</dbReference>
<dbReference type="GO" id="GO:0002116">
    <property type="term" value="C:semaphorin receptor complex"/>
    <property type="evidence" value="ECO:0007669"/>
    <property type="project" value="TreeGrafter"/>
</dbReference>
<dbReference type="GO" id="GO:0005524">
    <property type="term" value="F:ATP binding"/>
    <property type="evidence" value="ECO:0007669"/>
    <property type="project" value="UniProtKB-KW"/>
</dbReference>
<dbReference type="GO" id="GO:0017154">
    <property type="term" value="F:semaphorin receptor activity"/>
    <property type="evidence" value="ECO:0007669"/>
    <property type="project" value="InterPro"/>
</dbReference>
<dbReference type="GO" id="GO:0004714">
    <property type="term" value="F:transmembrane receptor protein tyrosine kinase activity"/>
    <property type="evidence" value="ECO:0007669"/>
    <property type="project" value="UniProtKB-EC"/>
</dbReference>
<dbReference type="GO" id="GO:0007169">
    <property type="term" value="P:cell surface receptor protein tyrosine kinase signaling pathway"/>
    <property type="evidence" value="ECO:0007669"/>
    <property type="project" value="InterPro"/>
</dbReference>
<dbReference type="GO" id="GO:0050918">
    <property type="term" value="P:positive chemotaxis"/>
    <property type="evidence" value="ECO:0000250"/>
    <property type="project" value="UniProtKB"/>
</dbReference>
<dbReference type="GO" id="GO:2001028">
    <property type="term" value="P:positive regulation of endothelial cell chemotaxis"/>
    <property type="evidence" value="ECO:0000250"/>
    <property type="project" value="UniProtKB"/>
</dbReference>
<dbReference type="GO" id="GO:0071526">
    <property type="term" value="P:semaphorin-plexin signaling pathway"/>
    <property type="evidence" value="ECO:0000250"/>
    <property type="project" value="UniProtKB"/>
</dbReference>
<dbReference type="CDD" id="cd00603">
    <property type="entry name" value="IPT_PCSR"/>
    <property type="match status" value="1"/>
</dbReference>
<dbReference type="CDD" id="cd01180">
    <property type="entry name" value="IPT_plexin_repeat1"/>
    <property type="match status" value="1"/>
</dbReference>
<dbReference type="CDD" id="cd01179">
    <property type="entry name" value="IPT_plexin_repeat2"/>
    <property type="match status" value="1"/>
</dbReference>
<dbReference type="CDD" id="cd05058">
    <property type="entry name" value="PTKc_Met_Ron"/>
    <property type="match status" value="1"/>
</dbReference>
<dbReference type="CDD" id="cd11278">
    <property type="entry name" value="Sema_MET"/>
    <property type="match status" value="1"/>
</dbReference>
<dbReference type="FunFam" id="1.10.510.10:FF:000093">
    <property type="entry name" value="Hepatocyte growth factor receptor"/>
    <property type="match status" value="1"/>
</dbReference>
<dbReference type="FunFam" id="2.130.10.10:FF:000088">
    <property type="entry name" value="Hepatocyte growth factor receptor"/>
    <property type="match status" value="1"/>
</dbReference>
<dbReference type="FunFam" id="2.60.40.10:FF:000213">
    <property type="entry name" value="Hepatocyte growth factor receptor"/>
    <property type="match status" value="1"/>
</dbReference>
<dbReference type="FunFam" id="2.60.40.10:FF:000400">
    <property type="entry name" value="Hepatocyte growth factor receptor"/>
    <property type="match status" value="1"/>
</dbReference>
<dbReference type="FunFam" id="2.60.40.10:FF:002708">
    <property type="entry name" value="Hepatocyte growth factor receptor"/>
    <property type="match status" value="1"/>
</dbReference>
<dbReference type="FunFam" id="3.30.200.20:FF:000188">
    <property type="entry name" value="Hepatocyte growth factor receptor"/>
    <property type="match status" value="1"/>
</dbReference>
<dbReference type="Gene3D" id="2.60.40.10">
    <property type="entry name" value="Immunoglobulins"/>
    <property type="match status" value="2"/>
</dbReference>
<dbReference type="Gene3D" id="3.30.200.20">
    <property type="entry name" value="Phosphorylase Kinase, domain 1"/>
    <property type="match status" value="1"/>
</dbReference>
<dbReference type="Gene3D" id="1.10.510.10">
    <property type="entry name" value="Transferase(Phosphotransferase) domain 1"/>
    <property type="match status" value="1"/>
</dbReference>
<dbReference type="Gene3D" id="2.130.10.10">
    <property type="entry name" value="YVTN repeat-like/Quinoprotein amine dehydrogenase"/>
    <property type="match status" value="1"/>
</dbReference>
<dbReference type="InterPro" id="IPR013783">
    <property type="entry name" value="Ig-like_fold"/>
</dbReference>
<dbReference type="InterPro" id="IPR014756">
    <property type="entry name" value="Ig_E-set"/>
</dbReference>
<dbReference type="InterPro" id="IPR002909">
    <property type="entry name" value="IPT_dom"/>
</dbReference>
<dbReference type="InterPro" id="IPR011009">
    <property type="entry name" value="Kinase-like_dom_sf"/>
</dbReference>
<dbReference type="InterPro" id="IPR031148">
    <property type="entry name" value="Plexin"/>
</dbReference>
<dbReference type="InterPro" id="IPR002165">
    <property type="entry name" value="Plexin_repeat"/>
</dbReference>
<dbReference type="InterPro" id="IPR000719">
    <property type="entry name" value="Prot_kinase_dom"/>
</dbReference>
<dbReference type="InterPro" id="IPR017441">
    <property type="entry name" value="Protein_kinase_ATP_BS"/>
</dbReference>
<dbReference type="InterPro" id="IPR016201">
    <property type="entry name" value="PSI"/>
</dbReference>
<dbReference type="InterPro" id="IPR001627">
    <property type="entry name" value="Semap_dom"/>
</dbReference>
<dbReference type="InterPro" id="IPR036352">
    <property type="entry name" value="Semap_dom_sf"/>
</dbReference>
<dbReference type="InterPro" id="IPR001245">
    <property type="entry name" value="Ser-Thr/Tyr_kinase_cat_dom"/>
</dbReference>
<dbReference type="InterPro" id="IPR008266">
    <property type="entry name" value="Tyr_kinase_AS"/>
</dbReference>
<dbReference type="InterPro" id="IPR020635">
    <property type="entry name" value="Tyr_kinase_cat_dom"/>
</dbReference>
<dbReference type="InterPro" id="IPR016244">
    <property type="entry name" value="Tyr_kinase_HGF/MSP_rcpt"/>
</dbReference>
<dbReference type="InterPro" id="IPR015943">
    <property type="entry name" value="WD40/YVTN_repeat-like_dom_sf"/>
</dbReference>
<dbReference type="PANTHER" id="PTHR22625:SF61">
    <property type="entry name" value="HEPATOCYTE GROWTH FACTOR RECEPTOR"/>
    <property type="match status" value="1"/>
</dbReference>
<dbReference type="PANTHER" id="PTHR22625">
    <property type="entry name" value="PLEXIN"/>
    <property type="match status" value="1"/>
</dbReference>
<dbReference type="Pfam" id="PF07714">
    <property type="entry name" value="PK_Tyr_Ser-Thr"/>
    <property type="match status" value="1"/>
</dbReference>
<dbReference type="Pfam" id="PF01437">
    <property type="entry name" value="PSI"/>
    <property type="match status" value="1"/>
</dbReference>
<dbReference type="Pfam" id="PF01403">
    <property type="entry name" value="Sema"/>
    <property type="match status" value="1"/>
</dbReference>
<dbReference type="Pfam" id="PF01833">
    <property type="entry name" value="TIG"/>
    <property type="match status" value="3"/>
</dbReference>
<dbReference type="PIRSF" id="PIRSF000617">
    <property type="entry name" value="TyrPK_HGF-R"/>
    <property type="match status" value="1"/>
</dbReference>
<dbReference type="PRINTS" id="PR00109">
    <property type="entry name" value="TYRKINASE"/>
</dbReference>
<dbReference type="SMART" id="SM00429">
    <property type="entry name" value="IPT"/>
    <property type="match status" value="4"/>
</dbReference>
<dbReference type="SMART" id="SM00423">
    <property type="entry name" value="PSI"/>
    <property type="match status" value="1"/>
</dbReference>
<dbReference type="SMART" id="SM00630">
    <property type="entry name" value="Sema"/>
    <property type="match status" value="1"/>
</dbReference>
<dbReference type="SMART" id="SM00219">
    <property type="entry name" value="TyrKc"/>
    <property type="match status" value="1"/>
</dbReference>
<dbReference type="SUPFAM" id="SSF81296">
    <property type="entry name" value="E set domains"/>
    <property type="match status" value="3"/>
</dbReference>
<dbReference type="SUPFAM" id="SSF103575">
    <property type="entry name" value="Plexin repeat"/>
    <property type="match status" value="1"/>
</dbReference>
<dbReference type="SUPFAM" id="SSF56112">
    <property type="entry name" value="Protein kinase-like (PK-like)"/>
    <property type="match status" value="1"/>
</dbReference>
<dbReference type="SUPFAM" id="SSF101912">
    <property type="entry name" value="Sema domain"/>
    <property type="match status" value="1"/>
</dbReference>
<dbReference type="PROSITE" id="PS00107">
    <property type="entry name" value="PROTEIN_KINASE_ATP"/>
    <property type="match status" value="1"/>
</dbReference>
<dbReference type="PROSITE" id="PS50011">
    <property type="entry name" value="PROTEIN_KINASE_DOM"/>
    <property type="match status" value="1"/>
</dbReference>
<dbReference type="PROSITE" id="PS00109">
    <property type="entry name" value="PROTEIN_KINASE_TYR"/>
    <property type="match status" value="1"/>
</dbReference>
<dbReference type="PROSITE" id="PS51004">
    <property type="entry name" value="SEMA"/>
    <property type="match status" value="1"/>
</dbReference>
<sequence length="1381" mass="154452">MKAPAVLVPGILVLLFTLVQRSNGECKEALAKSEMNVNMKYQLPNFTAETAIQNVILHEHHIFLGATNYIYVLNEEDLQKVAEYKTGPVLEHPDCFPCQDCSSKANLSGGVWKDNINMALVVDTYYDDQLISCGSVNRGTCQRHVFPHNHTADIQSEVHCIFSPQIEEPSQCPDCVVSALGAKVLSSVKDRFINFFVGNTINSSYFPHHPLHSISVRRLKETKDGFMFLTDQSYIDVLPEFRDSYPIKYIHAFESNNFIYFLTVQRETLNAQTFHTRIIRFCSLNSGLHSYMEMPLECILTEKRKKRSTKKEVFNILQAAYVSKPGAQLARQIGASLNDDILFGVFAQSKPDSAEPMDRSAMCAFPIKYVNDFFNKIVNKNNVRCLQHFYGPNHEHCFNRTLLRNSSGCEARRDEYRAEFTTALQRVDLFMGQFSEVLLTSISTFVKGDLTIANLGTSEGRFMQVVVSRSGPSTPHVNFLLDSHPVSPEVIVEHPLNQNGYTLVVTGKKITKIPLNGLGCRHFQSCSQCLSAPPFVQCGWCHDKCVRSEECPSGTWTQQICLPAIYKVFPTSAPLEGGTRLTICGWDFGFRRNNKFDLKKTRVLLGNESCTLTLSESTMNILKCTVGPAMNKHFNMSIIISNGHGTTQYSTFSYVDPIITSISPKYGPMAGGTLLTLTGNYLNSGNSRHISIGGKTCTLKSVSNSILECYTPAQTISTEFAVKLKIDLANRETSIFSYREDPIVYEIHPTKSFISGGSTITGVGKNLHSVSVPRMVINVHEAGRNFTVACQHRSNSEIICCTTPSLQQLNLQLPLKTKAFFMLDGILSKYFDLIYVHNPVFKPFEKPVMISMGNENVLEIKGNDIDPEAVKGEVLKVGNKSCENIHLHSEAVLCTVPNDLLKLNSELNIEWKQAISSTVLGKVIVQPDQNFTGLIAGVVSISIALLLLLGLFLWLKKRKQIKDLGSELVRYDARVHTPHLDRLVSARSVSPTTEMVSNESVDYRATFPEDQFPNSSQNGSCRQVQYPLTDMSPILTSGDSDISSPLLQNTVHIDLSALNPELVQAVQHVVIGPSSLIVHFNEVIGRGHFGCVYHGTLLDNDGKKIHCAVKSLNRITDIGEVSQFLTEGIIMKDFSHPNVLSLLGICLRSEGSPLVVLPYMKHGDLRNFIRNETHNPTVKDLIGFGLQVAKGMKYLASKKFVHRDLAARNCMLDEKFTVKVADFGLARDMYDKEYYSVHNKTGAKLPVKWMALESLQTQKFTTKSDVWSFGVLLWELMTRGAPPYPDVNTFDITVYLLQGRRLLQPEYCPDPLYEVMLKCWHPKAEMRPSFSELVSRISAIFSTFIGEHYVHVNATYVNVKCVAPYPSLLSSEDNADDEVDT</sequence>
<accession>A0M8R7</accession>
<gene>
    <name type="primary">MET</name>
</gene>
<organism>
    <name type="scientific">Papio anubis</name>
    <name type="common">Olive baboon</name>
    <dbReference type="NCBI Taxonomy" id="9555"/>
    <lineage>
        <taxon>Eukaryota</taxon>
        <taxon>Metazoa</taxon>
        <taxon>Chordata</taxon>
        <taxon>Craniata</taxon>
        <taxon>Vertebrata</taxon>
        <taxon>Euteleostomi</taxon>
        <taxon>Mammalia</taxon>
        <taxon>Eutheria</taxon>
        <taxon>Euarchontoglires</taxon>
        <taxon>Primates</taxon>
        <taxon>Haplorrhini</taxon>
        <taxon>Catarrhini</taxon>
        <taxon>Cercopithecidae</taxon>
        <taxon>Cercopithecinae</taxon>
        <taxon>Papio</taxon>
    </lineage>
</organism>
<name>MET_PAPAN</name>
<protein>
    <recommendedName>
        <fullName>Hepatocyte growth factor receptor</fullName>
        <shortName>HGF receptor</shortName>
        <ecNumber>2.7.10.1</ecNumber>
    </recommendedName>
    <alternativeName>
        <fullName>HGF/SF receptor</fullName>
    </alternativeName>
    <alternativeName>
        <fullName>Proto-oncogene c-Met</fullName>
    </alternativeName>
    <alternativeName>
        <fullName>Scatter factor receptor</fullName>
        <shortName>SF receptor</shortName>
    </alternativeName>
    <alternativeName>
        <fullName>Tyrosine-protein kinase Met</fullName>
    </alternativeName>
</protein>
<evidence type="ECO:0000250" key="1"/>
<evidence type="ECO:0000250" key="2">
    <source>
        <dbReference type="UniProtKB" id="P08581"/>
    </source>
</evidence>
<evidence type="ECO:0000250" key="3">
    <source>
        <dbReference type="UniProtKB" id="P16056"/>
    </source>
</evidence>
<evidence type="ECO:0000255" key="4"/>
<evidence type="ECO:0000255" key="5">
    <source>
        <dbReference type="PROSITE-ProRule" id="PRU00159"/>
    </source>
</evidence>
<evidence type="ECO:0000255" key="6">
    <source>
        <dbReference type="PROSITE-ProRule" id="PRU00352"/>
    </source>
</evidence>
<evidence type="ECO:0000255" key="7">
    <source>
        <dbReference type="PROSITE-ProRule" id="PRU10028"/>
    </source>
</evidence>
<proteinExistence type="inferred from homology"/>
<reference key="1">
    <citation type="journal article" date="2003" name="Nature">
        <title>Comparative analyses of multi-species sequences from targeted genomic regions.</title>
        <authorList>
            <person name="Thomas J.W."/>
            <person name="Touchman J.W."/>
            <person name="Blakesley R.W."/>
            <person name="Bouffard G.G."/>
            <person name="Beckstrom-Sternberg S.M."/>
            <person name="Margulies E.H."/>
            <person name="Blanchette M."/>
            <person name="Siepel A.C."/>
            <person name="Thomas P.J."/>
            <person name="McDowell J.C."/>
            <person name="Maskeri B."/>
            <person name="Hansen N.F."/>
            <person name="Schwartz M.S."/>
            <person name="Weber R.J."/>
            <person name="Kent W.J."/>
            <person name="Karolchik D."/>
            <person name="Bruen T.C."/>
            <person name="Bevan R."/>
            <person name="Cutler D.J."/>
            <person name="Schwartz S."/>
            <person name="Elnitski L."/>
            <person name="Idol J.R."/>
            <person name="Prasad A.B."/>
            <person name="Lee-Lin S.-Q."/>
            <person name="Maduro V.V.B."/>
            <person name="Summers T.J."/>
            <person name="Portnoy M.E."/>
            <person name="Dietrich N.L."/>
            <person name="Akhter N."/>
            <person name="Ayele K."/>
            <person name="Benjamin B."/>
            <person name="Cariaga K."/>
            <person name="Brinkley C.P."/>
            <person name="Brooks S.Y."/>
            <person name="Granite S."/>
            <person name="Guan X."/>
            <person name="Gupta J."/>
            <person name="Haghighi P."/>
            <person name="Ho S.-L."/>
            <person name="Huang M.C."/>
            <person name="Karlins E."/>
            <person name="Laric P.L."/>
            <person name="Legaspi R."/>
            <person name="Lim M.J."/>
            <person name="Maduro Q.L."/>
            <person name="Masiello C.A."/>
            <person name="Mastrian S.D."/>
            <person name="McCloskey J.C."/>
            <person name="Pearson R."/>
            <person name="Stantripop S."/>
            <person name="Tiongson E.E."/>
            <person name="Tran J.T."/>
            <person name="Tsurgeon C."/>
            <person name="Vogt J.L."/>
            <person name="Walker M.A."/>
            <person name="Wetherby K.D."/>
            <person name="Wiggins L.S."/>
            <person name="Young A.C."/>
            <person name="Zhang L.-H."/>
            <person name="Osoegawa K."/>
            <person name="Zhu B."/>
            <person name="Zhao B."/>
            <person name="Shu C.L."/>
            <person name="De Jong P.J."/>
            <person name="Lawrence C.E."/>
            <person name="Smit A.F."/>
            <person name="Chakravarti A."/>
            <person name="Haussler D."/>
            <person name="Green P."/>
            <person name="Miller W."/>
            <person name="Green E.D."/>
        </authorList>
    </citation>
    <scope>NUCLEOTIDE SEQUENCE [LARGE SCALE GENOMIC DNA]</scope>
</reference>